<reference key="1">
    <citation type="journal article" date="2007" name="DNA Res.">
        <title>Complete genomic structure of the bloom-forming toxic cyanobacterium Microcystis aeruginosa NIES-843.</title>
        <authorList>
            <person name="Kaneko T."/>
            <person name="Nakajima N."/>
            <person name="Okamoto S."/>
            <person name="Suzuki I."/>
            <person name="Tanabe Y."/>
            <person name="Tamaoki M."/>
            <person name="Nakamura Y."/>
            <person name="Kasai F."/>
            <person name="Watanabe A."/>
            <person name="Kawashima K."/>
            <person name="Kishida Y."/>
            <person name="Ono A."/>
            <person name="Shimizu Y."/>
            <person name="Takahashi C."/>
            <person name="Minami C."/>
            <person name="Fujishiro T."/>
            <person name="Kohara M."/>
            <person name="Katoh M."/>
            <person name="Nakazaki N."/>
            <person name="Nakayama S."/>
            <person name="Yamada M."/>
            <person name="Tabata S."/>
            <person name="Watanabe M.M."/>
        </authorList>
    </citation>
    <scope>NUCLEOTIDE SEQUENCE [LARGE SCALE GENOMIC DNA]</scope>
    <source>
        <strain>NIES-843 / IAM M-247</strain>
    </source>
</reference>
<accession>B0JHZ9</accession>
<name>RS19_MICAN</name>
<gene>
    <name evidence="1" type="primary">rpsS</name>
    <name evidence="1" type="synonym">rps19</name>
    <name type="ordered locus">MAE_57390</name>
</gene>
<feature type="chain" id="PRO_1000081778" description="Small ribosomal subunit protein uS19">
    <location>
        <begin position="1"/>
        <end position="93"/>
    </location>
</feature>
<sequence length="93" mass="10259">MGRSLKKGPFVAGHLMEKIEKLNAQGSKQVIKTWSRASTIIPDMVGHTIAVHNGKQHVPVYVSEQMVGHKLGEFAPTRTFRGHAKSDKKAGRK</sequence>
<evidence type="ECO:0000255" key="1">
    <source>
        <dbReference type="HAMAP-Rule" id="MF_00531"/>
    </source>
</evidence>
<evidence type="ECO:0000305" key="2"/>
<protein>
    <recommendedName>
        <fullName evidence="1">Small ribosomal subunit protein uS19</fullName>
    </recommendedName>
    <alternativeName>
        <fullName evidence="2">30S ribosomal protein S19</fullName>
    </alternativeName>
</protein>
<organism>
    <name type="scientific">Microcystis aeruginosa (strain NIES-843 / IAM M-2473)</name>
    <dbReference type="NCBI Taxonomy" id="449447"/>
    <lineage>
        <taxon>Bacteria</taxon>
        <taxon>Bacillati</taxon>
        <taxon>Cyanobacteriota</taxon>
        <taxon>Cyanophyceae</taxon>
        <taxon>Oscillatoriophycideae</taxon>
        <taxon>Chroococcales</taxon>
        <taxon>Microcystaceae</taxon>
        <taxon>Microcystis</taxon>
    </lineage>
</organism>
<comment type="function">
    <text evidence="1">Protein S19 forms a complex with S13 that binds strongly to the 16S ribosomal RNA.</text>
</comment>
<comment type="similarity">
    <text evidence="1">Belongs to the universal ribosomal protein uS19 family.</text>
</comment>
<dbReference type="EMBL" id="AP009552">
    <property type="protein sequence ID" value="BAG05561.1"/>
    <property type="molecule type" value="Genomic_DNA"/>
</dbReference>
<dbReference type="RefSeq" id="WP_002753908.1">
    <property type="nucleotide sequence ID" value="NC_010296.1"/>
</dbReference>
<dbReference type="SMR" id="B0JHZ9"/>
<dbReference type="STRING" id="449447.MAE_57390"/>
<dbReference type="PaxDb" id="449447-MAE_57390"/>
<dbReference type="EnsemblBacteria" id="BAG05561">
    <property type="protein sequence ID" value="BAG05561"/>
    <property type="gene ID" value="MAE_57390"/>
</dbReference>
<dbReference type="GeneID" id="66707897"/>
<dbReference type="KEGG" id="mar:MAE_57390"/>
<dbReference type="eggNOG" id="COG0185">
    <property type="taxonomic scope" value="Bacteria"/>
</dbReference>
<dbReference type="HOGENOM" id="CLU_144911_0_1_3"/>
<dbReference type="BioCyc" id="MAER449447:MAE_RS25010-MONOMER"/>
<dbReference type="Proteomes" id="UP000001510">
    <property type="component" value="Chromosome"/>
</dbReference>
<dbReference type="GO" id="GO:0005737">
    <property type="term" value="C:cytoplasm"/>
    <property type="evidence" value="ECO:0007669"/>
    <property type="project" value="UniProtKB-ARBA"/>
</dbReference>
<dbReference type="GO" id="GO:0015935">
    <property type="term" value="C:small ribosomal subunit"/>
    <property type="evidence" value="ECO:0007669"/>
    <property type="project" value="InterPro"/>
</dbReference>
<dbReference type="GO" id="GO:0019843">
    <property type="term" value="F:rRNA binding"/>
    <property type="evidence" value="ECO:0007669"/>
    <property type="project" value="UniProtKB-UniRule"/>
</dbReference>
<dbReference type="GO" id="GO:0003735">
    <property type="term" value="F:structural constituent of ribosome"/>
    <property type="evidence" value="ECO:0007669"/>
    <property type="project" value="InterPro"/>
</dbReference>
<dbReference type="GO" id="GO:0000028">
    <property type="term" value="P:ribosomal small subunit assembly"/>
    <property type="evidence" value="ECO:0007669"/>
    <property type="project" value="TreeGrafter"/>
</dbReference>
<dbReference type="GO" id="GO:0006412">
    <property type="term" value="P:translation"/>
    <property type="evidence" value="ECO:0007669"/>
    <property type="project" value="UniProtKB-UniRule"/>
</dbReference>
<dbReference type="FunFam" id="3.30.860.10:FF:000001">
    <property type="entry name" value="30S ribosomal protein S19"/>
    <property type="match status" value="1"/>
</dbReference>
<dbReference type="Gene3D" id="3.30.860.10">
    <property type="entry name" value="30s Ribosomal Protein S19, Chain A"/>
    <property type="match status" value="1"/>
</dbReference>
<dbReference type="HAMAP" id="MF_00531">
    <property type="entry name" value="Ribosomal_uS19"/>
    <property type="match status" value="1"/>
</dbReference>
<dbReference type="InterPro" id="IPR002222">
    <property type="entry name" value="Ribosomal_uS19"/>
</dbReference>
<dbReference type="InterPro" id="IPR005732">
    <property type="entry name" value="Ribosomal_uS19_bac-type"/>
</dbReference>
<dbReference type="InterPro" id="IPR020934">
    <property type="entry name" value="Ribosomal_uS19_CS"/>
</dbReference>
<dbReference type="InterPro" id="IPR023575">
    <property type="entry name" value="Ribosomal_uS19_SF"/>
</dbReference>
<dbReference type="NCBIfam" id="TIGR01050">
    <property type="entry name" value="rpsS_bact"/>
    <property type="match status" value="1"/>
</dbReference>
<dbReference type="PANTHER" id="PTHR11880">
    <property type="entry name" value="RIBOSOMAL PROTEIN S19P FAMILY MEMBER"/>
    <property type="match status" value="1"/>
</dbReference>
<dbReference type="PANTHER" id="PTHR11880:SF8">
    <property type="entry name" value="SMALL RIBOSOMAL SUBUNIT PROTEIN US19M"/>
    <property type="match status" value="1"/>
</dbReference>
<dbReference type="Pfam" id="PF00203">
    <property type="entry name" value="Ribosomal_S19"/>
    <property type="match status" value="1"/>
</dbReference>
<dbReference type="PIRSF" id="PIRSF002144">
    <property type="entry name" value="Ribosomal_S19"/>
    <property type="match status" value="1"/>
</dbReference>
<dbReference type="PRINTS" id="PR00975">
    <property type="entry name" value="RIBOSOMALS19"/>
</dbReference>
<dbReference type="SUPFAM" id="SSF54570">
    <property type="entry name" value="Ribosomal protein S19"/>
    <property type="match status" value="1"/>
</dbReference>
<dbReference type="PROSITE" id="PS00323">
    <property type="entry name" value="RIBOSOMAL_S19"/>
    <property type="match status" value="1"/>
</dbReference>
<keyword id="KW-0687">Ribonucleoprotein</keyword>
<keyword id="KW-0689">Ribosomal protein</keyword>
<keyword id="KW-0694">RNA-binding</keyword>
<keyword id="KW-0699">rRNA-binding</keyword>
<proteinExistence type="inferred from homology"/>